<accession>Q8KDR7</accession>
<name>TRUA_CHLTE</name>
<organism>
    <name type="scientific">Chlorobaculum tepidum (strain ATCC 49652 / DSM 12025 / NBRC 103806 / TLS)</name>
    <name type="common">Chlorobium tepidum</name>
    <dbReference type="NCBI Taxonomy" id="194439"/>
    <lineage>
        <taxon>Bacteria</taxon>
        <taxon>Pseudomonadati</taxon>
        <taxon>Chlorobiota</taxon>
        <taxon>Chlorobiia</taxon>
        <taxon>Chlorobiales</taxon>
        <taxon>Chlorobiaceae</taxon>
        <taxon>Chlorobaculum</taxon>
    </lineage>
</organism>
<comment type="function">
    <text evidence="1">Formation of pseudouridine at positions 38, 39 and 40 in the anticodon stem and loop of transfer RNAs.</text>
</comment>
<comment type="catalytic activity">
    <reaction evidence="1">
        <text>uridine(38/39/40) in tRNA = pseudouridine(38/39/40) in tRNA</text>
        <dbReference type="Rhea" id="RHEA:22376"/>
        <dbReference type="Rhea" id="RHEA-COMP:10085"/>
        <dbReference type="Rhea" id="RHEA-COMP:10087"/>
        <dbReference type="ChEBI" id="CHEBI:65314"/>
        <dbReference type="ChEBI" id="CHEBI:65315"/>
        <dbReference type="EC" id="5.4.99.12"/>
    </reaction>
</comment>
<comment type="subunit">
    <text evidence="1">Homodimer.</text>
</comment>
<comment type="similarity">
    <text evidence="1">Belongs to the tRNA pseudouridine synthase TruA family.</text>
</comment>
<gene>
    <name evidence="1" type="primary">truA</name>
    <name type="ordered locus">CT0978</name>
</gene>
<reference key="1">
    <citation type="journal article" date="2002" name="Proc. Natl. Acad. Sci. U.S.A.">
        <title>The complete genome sequence of Chlorobium tepidum TLS, a photosynthetic, anaerobic, green-sulfur bacterium.</title>
        <authorList>
            <person name="Eisen J.A."/>
            <person name="Nelson K.E."/>
            <person name="Paulsen I.T."/>
            <person name="Heidelberg J.F."/>
            <person name="Wu M."/>
            <person name="Dodson R.J."/>
            <person name="DeBoy R.T."/>
            <person name="Gwinn M.L."/>
            <person name="Nelson W.C."/>
            <person name="Haft D.H."/>
            <person name="Hickey E.K."/>
            <person name="Peterson J.D."/>
            <person name="Durkin A.S."/>
            <person name="Kolonay J.F."/>
            <person name="Yang F."/>
            <person name="Holt I.E."/>
            <person name="Umayam L.A."/>
            <person name="Mason T.M."/>
            <person name="Brenner M."/>
            <person name="Shea T.P."/>
            <person name="Parksey D.S."/>
            <person name="Nierman W.C."/>
            <person name="Feldblyum T.V."/>
            <person name="Hansen C.L."/>
            <person name="Craven M.B."/>
            <person name="Radune D."/>
            <person name="Vamathevan J.J."/>
            <person name="Khouri H.M."/>
            <person name="White O."/>
            <person name="Gruber T.M."/>
            <person name="Ketchum K.A."/>
            <person name="Venter J.C."/>
            <person name="Tettelin H."/>
            <person name="Bryant D.A."/>
            <person name="Fraser C.M."/>
        </authorList>
    </citation>
    <scope>NUCLEOTIDE SEQUENCE [LARGE SCALE GENOMIC DNA]</scope>
    <source>
        <strain>ATCC 49652 / DSM 12025 / NBRC 103806 / TLS</strain>
    </source>
</reference>
<protein>
    <recommendedName>
        <fullName evidence="1">tRNA pseudouridine synthase A</fullName>
        <ecNumber evidence="1">5.4.99.12</ecNumber>
    </recommendedName>
    <alternativeName>
        <fullName evidence="1">tRNA pseudouridine(38-40) synthase</fullName>
    </alternativeName>
    <alternativeName>
        <fullName evidence="1">tRNA pseudouridylate synthase I</fullName>
    </alternativeName>
    <alternativeName>
        <fullName evidence="1">tRNA-uridine isomerase I</fullName>
    </alternativeName>
</protein>
<keyword id="KW-0413">Isomerase</keyword>
<keyword id="KW-1185">Reference proteome</keyword>
<keyword id="KW-0819">tRNA processing</keyword>
<sequence length="247" mass="27738">MARSKRTIKMQIEYDGTGYSGWQRQPGDVVTVQGEIERVLERIMQEPVSIDGAGRTDSGVHARRQVASFATCSPMPLGRLIYSANSLLPSTIRINAMRQAPESFHARFSATSREYRYFLLEHPSAIDSRFAGCSHGKPDVGAMNRLALMLIGTHDFAAFSKETPDQYGTLCTVTAARWYRSGRFHVFRIEANRFLRSMVRFLVAGMIEVGMGRLEEGAFARMLESGHRPPKLKPADAAGLFLWKVRY</sequence>
<dbReference type="EC" id="5.4.99.12" evidence="1"/>
<dbReference type="EMBL" id="AE006470">
    <property type="protein sequence ID" value="AAM72213.1"/>
    <property type="molecule type" value="Genomic_DNA"/>
</dbReference>
<dbReference type="RefSeq" id="NP_661871.1">
    <property type="nucleotide sequence ID" value="NC_002932.3"/>
</dbReference>
<dbReference type="RefSeq" id="WP_010932658.1">
    <property type="nucleotide sequence ID" value="NC_002932.3"/>
</dbReference>
<dbReference type="SMR" id="Q8KDR7"/>
<dbReference type="STRING" id="194439.CT0978"/>
<dbReference type="EnsemblBacteria" id="AAM72213">
    <property type="protein sequence ID" value="AAM72213"/>
    <property type="gene ID" value="CT0978"/>
</dbReference>
<dbReference type="KEGG" id="cte:CT0978"/>
<dbReference type="PATRIC" id="fig|194439.7.peg.888"/>
<dbReference type="eggNOG" id="COG0101">
    <property type="taxonomic scope" value="Bacteria"/>
</dbReference>
<dbReference type="HOGENOM" id="CLU_014673_0_1_10"/>
<dbReference type="OrthoDB" id="9811823at2"/>
<dbReference type="Proteomes" id="UP000001007">
    <property type="component" value="Chromosome"/>
</dbReference>
<dbReference type="GO" id="GO:0003723">
    <property type="term" value="F:RNA binding"/>
    <property type="evidence" value="ECO:0007669"/>
    <property type="project" value="InterPro"/>
</dbReference>
<dbReference type="GO" id="GO:0160147">
    <property type="term" value="F:tRNA pseudouridine(38-40) synthase activity"/>
    <property type="evidence" value="ECO:0007669"/>
    <property type="project" value="UniProtKB-EC"/>
</dbReference>
<dbReference type="GO" id="GO:0031119">
    <property type="term" value="P:tRNA pseudouridine synthesis"/>
    <property type="evidence" value="ECO:0007669"/>
    <property type="project" value="UniProtKB-UniRule"/>
</dbReference>
<dbReference type="CDD" id="cd02570">
    <property type="entry name" value="PseudoU_synth_EcTruA"/>
    <property type="match status" value="1"/>
</dbReference>
<dbReference type="FunFam" id="3.30.70.580:FF:000001">
    <property type="entry name" value="tRNA pseudouridine synthase A"/>
    <property type="match status" value="1"/>
</dbReference>
<dbReference type="Gene3D" id="3.30.70.660">
    <property type="entry name" value="Pseudouridine synthase I, catalytic domain, C-terminal subdomain"/>
    <property type="match status" value="1"/>
</dbReference>
<dbReference type="Gene3D" id="3.30.70.580">
    <property type="entry name" value="Pseudouridine synthase I, catalytic domain, N-terminal subdomain"/>
    <property type="match status" value="1"/>
</dbReference>
<dbReference type="HAMAP" id="MF_00171">
    <property type="entry name" value="TruA"/>
    <property type="match status" value="1"/>
</dbReference>
<dbReference type="InterPro" id="IPR020103">
    <property type="entry name" value="PsdUridine_synth_cat_dom_sf"/>
</dbReference>
<dbReference type="InterPro" id="IPR001406">
    <property type="entry name" value="PsdUridine_synth_TruA"/>
</dbReference>
<dbReference type="InterPro" id="IPR020097">
    <property type="entry name" value="PsdUridine_synth_TruA_a/b_dom"/>
</dbReference>
<dbReference type="InterPro" id="IPR020095">
    <property type="entry name" value="PsdUridine_synth_TruA_C"/>
</dbReference>
<dbReference type="InterPro" id="IPR020094">
    <property type="entry name" value="TruA/RsuA/RluB/E/F_N"/>
</dbReference>
<dbReference type="NCBIfam" id="TIGR00071">
    <property type="entry name" value="hisT_truA"/>
    <property type="match status" value="1"/>
</dbReference>
<dbReference type="PANTHER" id="PTHR11142">
    <property type="entry name" value="PSEUDOURIDYLATE SYNTHASE"/>
    <property type="match status" value="1"/>
</dbReference>
<dbReference type="PANTHER" id="PTHR11142:SF0">
    <property type="entry name" value="TRNA PSEUDOURIDINE SYNTHASE-LIKE 1"/>
    <property type="match status" value="1"/>
</dbReference>
<dbReference type="Pfam" id="PF01416">
    <property type="entry name" value="PseudoU_synth_1"/>
    <property type="match status" value="2"/>
</dbReference>
<dbReference type="PIRSF" id="PIRSF001430">
    <property type="entry name" value="tRNA_psdUrid_synth"/>
    <property type="match status" value="1"/>
</dbReference>
<dbReference type="SUPFAM" id="SSF55120">
    <property type="entry name" value="Pseudouridine synthase"/>
    <property type="match status" value="1"/>
</dbReference>
<proteinExistence type="inferred from homology"/>
<feature type="chain" id="PRO_0000057360" description="tRNA pseudouridine synthase A">
    <location>
        <begin position="1"/>
        <end position="247"/>
    </location>
</feature>
<feature type="active site" description="Nucleophile" evidence="1">
    <location>
        <position position="57"/>
    </location>
</feature>
<feature type="binding site" evidence="1">
    <location>
        <position position="115"/>
    </location>
    <ligand>
        <name>substrate</name>
    </ligand>
</feature>
<evidence type="ECO:0000255" key="1">
    <source>
        <dbReference type="HAMAP-Rule" id="MF_00171"/>
    </source>
</evidence>